<comment type="subunit">
    <text evidence="1">Homohexamer.</text>
</comment>
<comment type="similarity">
    <text evidence="2">Belongs to the GTP cyclohydrolase I type 2/NIF3 family.</text>
</comment>
<proteinExistence type="inferred from homology"/>
<evidence type="ECO:0000250" key="1">
    <source>
        <dbReference type="UniProtKB" id="P0AFP6"/>
    </source>
</evidence>
<evidence type="ECO:0000305" key="2"/>
<organism>
    <name type="scientific">Pseudomonas aeruginosa (strain ATCC 15692 / DSM 22644 / CIP 104116 / JCM 14847 / LMG 12228 / 1C / PRS 101 / PAO1)</name>
    <dbReference type="NCBI Taxonomy" id="208964"/>
    <lineage>
        <taxon>Bacteria</taxon>
        <taxon>Pseudomonadati</taxon>
        <taxon>Pseudomonadota</taxon>
        <taxon>Gammaproteobacteria</taxon>
        <taxon>Pseudomonadales</taxon>
        <taxon>Pseudomonadaceae</taxon>
        <taxon>Pseudomonas</taxon>
    </lineage>
</organism>
<accession>Q9HVX2</accession>
<reference key="1">
    <citation type="journal article" date="2000" name="Nature">
        <title>Complete genome sequence of Pseudomonas aeruginosa PAO1, an opportunistic pathogen.</title>
        <authorList>
            <person name="Stover C.K."/>
            <person name="Pham X.-Q.T."/>
            <person name="Erwin A.L."/>
            <person name="Mizoguchi S.D."/>
            <person name="Warrener P."/>
            <person name="Hickey M.J."/>
            <person name="Brinkman F.S.L."/>
            <person name="Hufnagle W.O."/>
            <person name="Kowalik D.J."/>
            <person name="Lagrou M."/>
            <person name="Garber R.L."/>
            <person name="Goltry L."/>
            <person name="Tolentino E."/>
            <person name="Westbrock-Wadman S."/>
            <person name="Yuan Y."/>
            <person name="Brody L.L."/>
            <person name="Coulter S.N."/>
            <person name="Folger K.R."/>
            <person name="Kas A."/>
            <person name="Larbig K."/>
            <person name="Lim R.M."/>
            <person name="Smith K.A."/>
            <person name="Spencer D.H."/>
            <person name="Wong G.K.-S."/>
            <person name="Wu Z."/>
            <person name="Paulsen I.T."/>
            <person name="Reizer J."/>
            <person name="Saier M.H. Jr."/>
            <person name="Hancock R.E.W."/>
            <person name="Lory S."/>
            <person name="Olson M.V."/>
        </authorList>
    </citation>
    <scope>NUCLEOTIDE SEQUENCE [LARGE SCALE GENOMIC DNA]</scope>
    <source>
        <strain>ATCC 15692 / DSM 22644 / CIP 104116 / JCM 14847 / LMG 12228 / 1C / PRS 101 / PAO1</strain>
    </source>
</reference>
<protein>
    <recommendedName>
        <fullName>GTP cyclohydrolase 1 type 2 homolog</fullName>
    </recommendedName>
</protein>
<feature type="chain" id="PRO_0000147323" description="GTP cyclohydrolase 1 type 2 homolog">
    <location>
        <begin position="1"/>
        <end position="252"/>
    </location>
</feature>
<feature type="binding site" evidence="1">
    <location>
        <position position="65"/>
    </location>
    <ligand>
        <name>a divalent metal cation</name>
        <dbReference type="ChEBI" id="CHEBI:60240"/>
        <label>1</label>
    </ligand>
</feature>
<feature type="binding site" evidence="1">
    <location>
        <position position="66"/>
    </location>
    <ligand>
        <name>a divalent metal cation</name>
        <dbReference type="ChEBI" id="CHEBI:60240"/>
        <label>2</label>
    </ligand>
</feature>
<feature type="binding site" evidence="1">
    <location>
        <position position="103"/>
    </location>
    <ligand>
        <name>a divalent metal cation</name>
        <dbReference type="ChEBI" id="CHEBI:60240"/>
        <label>1</label>
    </ligand>
</feature>
<feature type="binding site" evidence="1">
    <location>
        <position position="220"/>
    </location>
    <ligand>
        <name>a divalent metal cation</name>
        <dbReference type="ChEBI" id="CHEBI:60240"/>
        <label>2</label>
    </ligand>
</feature>
<feature type="binding site" evidence="1">
    <location>
        <position position="224"/>
    </location>
    <ligand>
        <name>a divalent metal cation</name>
        <dbReference type="ChEBI" id="CHEBI:60240"/>
        <label>1</label>
    </ligand>
</feature>
<feature type="binding site" evidence="1">
    <location>
        <position position="224"/>
    </location>
    <ligand>
        <name>a divalent metal cation</name>
        <dbReference type="ChEBI" id="CHEBI:60240"/>
        <label>2</label>
    </ligand>
</feature>
<gene>
    <name type="ordered locus">PA4445</name>
</gene>
<keyword id="KW-0479">Metal-binding</keyword>
<keyword id="KW-1185">Reference proteome</keyword>
<sequence>MAIALSTLVEEADRYLDAARIQDYCPNGLQVEGRPQVRRIVSGVTASQALLDAAVEADADVVLVHHGYFWKGENPCVVGMKQRRLKTLLNNDISLLAYHLPLDLHPEVGNNVQLARQLGFEVEGPLEPGNPRSIVLLGSLAEPMQPADFARHVRDALGREPLLVDAGQPIRRIAWCTGGAQGYIDQAIAAGVDAYLTGEVSEQTVHSARENGISFIAAGHHATERYGVQALGDYLGKRFAIEHLFIDCPNPA</sequence>
<dbReference type="EMBL" id="AE004091">
    <property type="protein sequence ID" value="AAG07833.1"/>
    <property type="molecule type" value="Genomic_DNA"/>
</dbReference>
<dbReference type="PIR" id="A83089">
    <property type="entry name" value="A83089"/>
</dbReference>
<dbReference type="RefSeq" id="NP_253135.1">
    <property type="nucleotide sequence ID" value="NC_002516.2"/>
</dbReference>
<dbReference type="RefSeq" id="WP_003094318.1">
    <property type="nucleotide sequence ID" value="NZ_QZGE01000004.1"/>
</dbReference>
<dbReference type="SMR" id="Q9HVX2"/>
<dbReference type="FunCoup" id="Q9HVX2">
    <property type="interactions" value="263"/>
</dbReference>
<dbReference type="STRING" id="208964.PA4445"/>
<dbReference type="PaxDb" id="208964-PA4445"/>
<dbReference type="GeneID" id="880975"/>
<dbReference type="KEGG" id="pae:PA4445"/>
<dbReference type="PATRIC" id="fig|208964.12.peg.4654"/>
<dbReference type="PseudoCAP" id="PA4445"/>
<dbReference type="HOGENOM" id="CLU_037423_3_0_6"/>
<dbReference type="InParanoid" id="Q9HVX2"/>
<dbReference type="OrthoDB" id="9800881at2"/>
<dbReference type="PhylomeDB" id="Q9HVX2"/>
<dbReference type="BioCyc" id="PAER208964:G1FZ6-4533-MONOMER"/>
<dbReference type="Proteomes" id="UP000002438">
    <property type="component" value="Chromosome"/>
</dbReference>
<dbReference type="GO" id="GO:0005737">
    <property type="term" value="C:cytoplasm"/>
    <property type="evidence" value="ECO:0000318"/>
    <property type="project" value="GO_Central"/>
</dbReference>
<dbReference type="GO" id="GO:0046872">
    <property type="term" value="F:metal ion binding"/>
    <property type="evidence" value="ECO:0007669"/>
    <property type="project" value="UniProtKB-KW"/>
</dbReference>
<dbReference type="FunFam" id="3.40.1390.30:FF:000002">
    <property type="entry name" value="Nif3-like dinuclear metal center protein"/>
    <property type="match status" value="1"/>
</dbReference>
<dbReference type="Gene3D" id="3.40.1390.30">
    <property type="entry name" value="NIF3 (NGG1p interacting factor 3)-like"/>
    <property type="match status" value="2"/>
</dbReference>
<dbReference type="InterPro" id="IPR002678">
    <property type="entry name" value="DUF34/NIF3"/>
</dbReference>
<dbReference type="InterPro" id="IPR036069">
    <property type="entry name" value="DUF34/NIF3_sf"/>
</dbReference>
<dbReference type="NCBIfam" id="TIGR00486">
    <property type="entry name" value="YbgI_SA1388"/>
    <property type="match status" value="1"/>
</dbReference>
<dbReference type="PANTHER" id="PTHR13799:SF14">
    <property type="entry name" value="GTP CYCLOHYDROLASE 1 TYPE 2 HOMOLOG"/>
    <property type="match status" value="1"/>
</dbReference>
<dbReference type="PANTHER" id="PTHR13799">
    <property type="entry name" value="NGG1 INTERACTING FACTOR 3"/>
    <property type="match status" value="1"/>
</dbReference>
<dbReference type="Pfam" id="PF01784">
    <property type="entry name" value="DUF34_NIF3"/>
    <property type="match status" value="1"/>
</dbReference>
<dbReference type="SUPFAM" id="SSF102705">
    <property type="entry name" value="NIF3 (NGG1p interacting factor 3)-like"/>
    <property type="match status" value="1"/>
</dbReference>
<name>GCH1L_PSEAE</name>